<feature type="chain" id="PRO_0000355822" description="Large ribosomal subunit protein uL14">
    <location>
        <begin position="1"/>
        <end position="122"/>
    </location>
</feature>
<dbReference type="EMBL" id="AE017244">
    <property type="protein sequence ID" value="AAZ53558.1"/>
    <property type="molecule type" value="Genomic_DNA"/>
</dbReference>
<dbReference type="RefSeq" id="WP_011206035.1">
    <property type="nucleotide sequence ID" value="NC_007332.1"/>
</dbReference>
<dbReference type="SMR" id="Q4A8I1"/>
<dbReference type="GeneID" id="41334483"/>
<dbReference type="KEGG" id="mhp:MHP7448_0184"/>
<dbReference type="HOGENOM" id="CLU_095071_2_1_14"/>
<dbReference type="Proteomes" id="UP000000553">
    <property type="component" value="Chromosome"/>
</dbReference>
<dbReference type="GO" id="GO:0022625">
    <property type="term" value="C:cytosolic large ribosomal subunit"/>
    <property type="evidence" value="ECO:0007669"/>
    <property type="project" value="TreeGrafter"/>
</dbReference>
<dbReference type="GO" id="GO:0070180">
    <property type="term" value="F:large ribosomal subunit rRNA binding"/>
    <property type="evidence" value="ECO:0007669"/>
    <property type="project" value="TreeGrafter"/>
</dbReference>
<dbReference type="GO" id="GO:0003735">
    <property type="term" value="F:structural constituent of ribosome"/>
    <property type="evidence" value="ECO:0007669"/>
    <property type="project" value="InterPro"/>
</dbReference>
<dbReference type="GO" id="GO:0006412">
    <property type="term" value="P:translation"/>
    <property type="evidence" value="ECO:0007669"/>
    <property type="project" value="UniProtKB-UniRule"/>
</dbReference>
<dbReference type="CDD" id="cd00337">
    <property type="entry name" value="Ribosomal_uL14"/>
    <property type="match status" value="1"/>
</dbReference>
<dbReference type="Gene3D" id="2.40.150.20">
    <property type="entry name" value="Ribosomal protein L14"/>
    <property type="match status" value="1"/>
</dbReference>
<dbReference type="HAMAP" id="MF_01367">
    <property type="entry name" value="Ribosomal_uL14"/>
    <property type="match status" value="1"/>
</dbReference>
<dbReference type="InterPro" id="IPR000218">
    <property type="entry name" value="Ribosomal_uL14"/>
</dbReference>
<dbReference type="InterPro" id="IPR005745">
    <property type="entry name" value="Ribosomal_uL14_bac-type"/>
</dbReference>
<dbReference type="InterPro" id="IPR019972">
    <property type="entry name" value="Ribosomal_uL14_CS"/>
</dbReference>
<dbReference type="InterPro" id="IPR036853">
    <property type="entry name" value="Ribosomal_uL14_sf"/>
</dbReference>
<dbReference type="NCBIfam" id="TIGR01067">
    <property type="entry name" value="rplN_bact"/>
    <property type="match status" value="1"/>
</dbReference>
<dbReference type="PANTHER" id="PTHR11761">
    <property type="entry name" value="50S/60S RIBOSOMAL PROTEIN L14/L23"/>
    <property type="match status" value="1"/>
</dbReference>
<dbReference type="PANTHER" id="PTHR11761:SF3">
    <property type="entry name" value="LARGE RIBOSOMAL SUBUNIT PROTEIN UL14M"/>
    <property type="match status" value="1"/>
</dbReference>
<dbReference type="Pfam" id="PF00238">
    <property type="entry name" value="Ribosomal_L14"/>
    <property type="match status" value="1"/>
</dbReference>
<dbReference type="SMART" id="SM01374">
    <property type="entry name" value="Ribosomal_L14"/>
    <property type="match status" value="1"/>
</dbReference>
<dbReference type="SUPFAM" id="SSF50193">
    <property type="entry name" value="Ribosomal protein L14"/>
    <property type="match status" value="1"/>
</dbReference>
<dbReference type="PROSITE" id="PS00049">
    <property type="entry name" value="RIBOSOMAL_L14"/>
    <property type="match status" value="1"/>
</dbReference>
<reference key="1">
    <citation type="journal article" date="2005" name="J. Bacteriol.">
        <title>Swine and poultry pathogens: the complete genome sequences of two strains of Mycoplasma hyopneumoniae and a strain of Mycoplasma synoviae.</title>
        <authorList>
            <person name="Vasconcelos A.T.R."/>
            <person name="Ferreira H.B."/>
            <person name="Bizarro C.V."/>
            <person name="Bonatto S.L."/>
            <person name="Carvalho M.O."/>
            <person name="Pinto P.M."/>
            <person name="Almeida D.F."/>
            <person name="Almeida L.G.P."/>
            <person name="Almeida R."/>
            <person name="Alves-Junior L."/>
            <person name="Assuncao E.N."/>
            <person name="Azevedo V.A.C."/>
            <person name="Bogo M.R."/>
            <person name="Brigido M.M."/>
            <person name="Brocchi M."/>
            <person name="Burity H.A."/>
            <person name="Camargo A.A."/>
            <person name="Camargo S.S."/>
            <person name="Carepo M.S."/>
            <person name="Carraro D.M."/>
            <person name="de Mattos Cascardo J.C."/>
            <person name="Castro L.A."/>
            <person name="Cavalcanti G."/>
            <person name="Chemale G."/>
            <person name="Collevatti R.G."/>
            <person name="Cunha C.W."/>
            <person name="Dallagiovanna B."/>
            <person name="Dambros B.P."/>
            <person name="Dellagostin O.A."/>
            <person name="Falcao C."/>
            <person name="Fantinatti-Garboggini F."/>
            <person name="Felipe M.S.S."/>
            <person name="Fiorentin L."/>
            <person name="Franco G.R."/>
            <person name="Freitas N.S.A."/>
            <person name="Frias D."/>
            <person name="Grangeiro T.B."/>
            <person name="Grisard E.C."/>
            <person name="Guimaraes C.T."/>
            <person name="Hungria M."/>
            <person name="Jardim S.N."/>
            <person name="Krieger M.A."/>
            <person name="Laurino J.P."/>
            <person name="Lima L.F.A."/>
            <person name="Lopes M.I."/>
            <person name="Loreto E.L.S."/>
            <person name="Madeira H.M.F."/>
            <person name="Manfio G.P."/>
            <person name="Maranhao A.Q."/>
            <person name="Martinkovics C.T."/>
            <person name="Medeiros S.R.B."/>
            <person name="Moreira M.A.M."/>
            <person name="Neiva M."/>
            <person name="Ramalho-Neto C.E."/>
            <person name="Nicolas M.F."/>
            <person name="Oliveira S.C."/>
            <person name="Paixao R.F.C."/>
            <person name="Pedrosa F.O."/>
            <person name="Pena S.D.J."/>
            <person name="Pereira M."/>
            <person name="Pereira-Ferrari L."/>
            <person name="Piffer I."/>
            <person name="Pinto L.S."/>
            <person name="Potrich D.P."/>
            <person name="Salim A.C.M."/>
            <person name="Santos F.R."/>
            <person name="Schmitt R."/>
            <person name="Schneider M.P.C."/>
            <person name="Schrank A."/>
            <person name="Schrank I.S."/>
            <person name="Schuck A.F."/>
            <person name="Seuanez H.N."/>
            <person name="Silva D.W."/>
            <person name="Silva R."/>
            <person name="Silva S.C."/>
            <person name="Soares C.M.A."/>
            <person name="Souza K.R.L."/>
            <person name="Souza R.C."/>
            <person name="Staats C.C."/>
            <person name="Steffens M.B.R."/>
            <person name="Teixeira S.M.R."/>
            <person name="Urmenyi T.P."/>
            <person name="Vainstein M.H."/>
            <person name="Zuccherato L.W."/>
            <person name="Simpson A.J.G."/>
            <person name="Zaha A."/>
        </authorList>
    </citation>
    <scope>NUCLEOTIDE SEQUENCE [LARGE SCALE GENOMIC DNA]</scope>
    <source>
        <strain>7448</strain>
    </source>
</reference>
<evidence type="ECO:0000255" key="1">
    <source>
        <dbReference type="HAMAP-Rule" id="MF_01367"/>
    </source>
</evidence>
<evidence type="ECO:0000305" key="2"/>
<sequence>MLQELSRLNVADNTGAKIVGVIRNLGGSVKKTSNIGDIVVVSVKKAIPNGMLKEGQVVKALIVRSTYGLRRKNGTHIKFDDNAVVIIKEDGTPRGTRVFGPIAREIREKGYLKIASLAQEVL</sequence>
<accession>Q4A8I1</accession>
<keyword id="KW-0687">Ribonucleoprotein</keyword>
<keyword id="KW-0689">Ribosomal protein</keyword>
<keyword id="KW-0694">RNA-binding</keyword>
<keyword id="KW-0699">rRNA-binding</keyword>
<proteinExistence type="inferred from homology"/>
<comment type="function">
    <text evidence="1">Binds to 23S rRNA. Forms part of two intersubunit bridges in the 70S ribosome.</text>
</comment>
<comment type="subunit">
    <text evidence="1">Part of the 50S ribosomal subunit. Forms a cluster with proteins L3 and L19. In the 70S ribosome, L14 and L19 interact and together make contacts with the 16S rRNA in bridges B5 and B8.</text>
</comment>
<comment type="similarity">
    <text evidence="1">Belongs to the universal ribosomal protein uL14 family.</text>
</comment>
<protein>
    <recommendedName>
        <fullName evidence="1">Large ribosomal subunit protein uL14</fullName>
    </recommendedName>
    <alternativeName>
        <fullName evidence="2">50S ribosomal protein L14</fullName>
    </alternativeName>
</protein>
<name>RL14_MESH7</name>
<gene>
    <name evidence="1" type="primary">rplN</name>
    <name type="ordered locus">MHP7448_0184</name>
</gene>
<organism>
    <name type="scientific">Mesomycoplasma hyopneumoniae (strain 7448)</name>
    <name type="common">Mycoplasma hyopneumoniae</name>
    <dbReference type="NCBI Taxonomy" id="262722"/>
    <lineage>
        <taxon>Bacteria</taxon>
        <taxon>Bacillati</taxon>
        <taxon>Mycoplasmatota</taxon>
        <taxon>Mycoplasmoidales</taxon>
        <taxon>Metamycoplasmataceae</taxon>
        <taxon>Mesomycoplasma</taxon>
    </lineage>
</organism>